<feature type="signal peptide" evidence="3">
    <location>
        <begin position="1"/>
        <end position="26"/>
    </location>
</feature>
<feature type="chain" id="PRO_0000363996" description="Glutamate [NMDA] receptor subunit 1" evidence="3">
    <location>
        <begin position="27"/>
        <end position="997"/>
    </location>
</feature>
<feature type="topological domain" description="Extracellular" evidence="3">
    <location>
        <begin position="27"/>
        <end position="573"/>
    </location>
</feature>
<feature type="transmembrane region" description="Helical" evidence="3">
    <location>
        <begin position="574"/>
        <end position="594"/>
    </location>
</feature>
<feature type="topological domain" description="Cytoplasmic" evidence="3">
    <location>
        <begin position="595"/>
        <end position="651"/>
    </location>
</feature>
<feature type="transmembrane region" description="Helical" evidence="3">
    <location>
        <begin position="652"/>
        <end position="672"/>
    </location>
</feature>
<feature type="topological domain" description="Extracellular" evidence="3">
    <location>
        <begin position="673"/>
        <end position="831"/>
    </location>
</feature>
<feature type="transmembrane region" description="Helical" evidence="3">
    <location>
        <begin position="832"/>
        <end position="852"/>
    </location>
</feature>
<feature type="topological domain" description="Cytoplasmic" evidence="3">
    <location>
        <begin position="853"/>
        <end position="997"/>
    </location>
</feature>
<feature type="region of interest" description="Disordered" evidence="4">
    <location>
        <begin position="970"/>
        <end position="997"/>
    </location>
</feature>
<feature type="compositionally biased region" description="Polar residues" evidence="4">
    <location>
        <begin position="987"/>
        <end position="997"/>
    </location>
</feature>
<feature type="binding site" evidence="1">
    <location>
        <begin position="530"/>
        <end position="532"/>
    </location>
    <ligand>
        <name>glycine</name>
        <dbReference type="ChEBI" id="CHEBI:57305"/>
    </ligand>
</feature>
<feature type="binding site" evidence="1">
    <location>
        <position position="537"/>
    </location>
    <ligand>
        <name>glycine</name>
        <dbReference type="ChEBI" id="CHEBI:57305"/>
    </ligand>
</feature>
<feature type="binding site" evidence="1">
    <location>
        <position position="703"/>
    </location>
    <ligand>
        <name>glycine</name>
        <dbReference type="ChEBI" id="CHEBI:57305"/>
    </ligand>
</feature>
<feature type="binding site" evidence="1">
    <location>
        <position position="747"/>
    </location>
    <ligand>
        <name>glycine</name>
        <dbReference type="ChEBI" id="CHEBI:57305"/>
    </ligand>
</feature>
<feature type="glycosylation site" description="N-linked (GlcNAc...) asparagine" evidence="3">
    <location>
        <position position="258"/>
    </location>
</feature>
<feature type="glycosylation site" description="N-linked (GlcNAc...) asparagine" evidence="3">
    <location>
        <position position="314"/>
    </location>
</feature>
<feature type="glycosylation site" description="N-linked (GlcNAc...) asparagine" evidence="3">
    <location>
        <position position="345"/>
    </location>
</feature>
<feature type="glycosylation site" description="N-linked (GlcNAc...) asparagine" evidence="3">
    <location>
        <position position="397"/>
    </location>
</feature>
<feature type="glycosylation site" description="N-linked (GlcNAc...) asparagine" evidence="3">
    <location>
        <position position="454"/>
    </location>
</feature>
<feature type="glycosylation site" description="N-linked (GlcNAc...) asparagine" evidence="3">
    <location>
        <position position="481"/>
    </location>
</feature>
<feature type="glycosylation site" description="N-linked (GlcNAc...) asparagine" evidence="3">
    <location>
        <position position="501"/>
    </location>
</feature>
<feature type="glycosylation site" description="N-linked (GlcNAc...) asparagine" evidence="9">
    <location>
        <position position="693"/>
    </location>
</feature>
<feature type="disulfide bond" description="Interchain" evidence="2">
    <location>
        <position position="93"/>
    </location>
</feature>
<sequence length="997" mass="112288">MAMAEFVFCRPLFGLAIVLLVAPIDAAQRHTASDNPSTYNIGGVLSNSDSEEHFSTTIKHLNFDQQYVPRKVTYYDKTIRMDKNPIKTVFNVCDKLIENRVYAVVVSHEQTSGDLSPAAVSYTSGFYSIPVIGISSRDAAFSDKNIHVSFLRTVPPYYHQADVWLEMLSHFAYTKVIIIHSSDTDGRAILGRFQTTSQTYYDDVDVRATVELIVEFEPKLESFTEHLIDMKTAQSRVYLMYASTEDAQVIFRDAGEYNMTGEGHVWIVTEQALFSNNTPDGVLGLQLEHAHSDKGHIRDSVYVLASAIKEMISNETIAEAPKDCGDSAVNWESGKRLFQYLKSRNITGETGQVAFDDNGDRIYAGYDVINIREQQKKHVVGKFSYDSMRAKMRMRINDSEIIWPGKQRRKPEGIMIPTHLRLLTIEEKPFVYVRRMGDDEFRCEPDERPCPLFNNSDATANEFCCRGYCIDLLIELSKRINFTYDLALSPDGQFGHYILRNNTGAMTLRKEWTGLIGELVNERADMIVAPLTINPERAEYIEFSKPFKYQGITILEKKPSRSSTLVSFLQPFSNTLWILVMVSVHVVALVLYLLDRFSPFGRFKLSHSDSNEEKALNLSSAVWFAWGVLLNSGIGEGTPRSFSARVLGMVWAGFAMIIVASYTANLAAFLVLERPKTKLSGINDARLRNTMENLTCATVKGSSVDMYFRRQVELSNMYRTMEANNYATAEQAIQDVKKGKLMAFIWDSSRLEYEASKDCELVTAGELFGRSGYGIGLQKGSPWTDAVTLAILEFHESGFMEKLDKQWIFHGHVQQNCELFEKTPNTLGLKNMAGVFILVGVGIAGGVGLIIIEVIYKKHQVKKQKRLDIARHAADKWRGTIEKRKTIRASLAMQRQYNVGLNSTHAPGTISLAVDKRRYPRLGQRLGPERAWPGDAADVLRIRRPYELGNPGQSPKVMAANQPGMPMPMLGKTRPQQSVLPPRYSPGYTSDVSHLVV</sequence>
<gene>
    <name evidence="14 17" type="primary">Nmdar1</name>
    <name evidence="16" type="synonym">nmr</name>
    <name evidence="11" type="synonym">NR1</name>
    <name type="ORF">CG2902</name>
</gene>
<dbReference type="EMBL" id="X71790">
    <property type="protein sequence ID" value="CAA50675.1"/>
    <property type="molecule type" value="mRNA"/>
</dbReference>
<dbReference type="EMBL" id="AE014297">
    <property type="protein sequence ID" value="AAF52016.1"/>
    <property type="molecule type" value="Genomic_DNA"/>
</dbReference>
<dbReference type="EMBL" id="AY070577">
    <property type="protein sequence ID" value="AAL48048.1"/>
    <property type="molecule type" value="mRNA"/>
</dbReference>
<dbReference type="PIR" id="S33754">
    <property type="entry name" value="S33754"/>
</dbReference>
<dbReference type="RefSeq" id="NP_730940.1">
    <property type="nucleotide sequence ID" value="NM_169059.2"/>
</dbReference>
<dbReference type="SMR" id="Q24418"/>
<dbReference type="BioGRID" id="65872">
    <property type="interactions" value="5"/>
</dbReference>
<dbReference type="FunCoup" id="Q24418">
    <property type="interactions" value="395"/>
</dbReference>
<dbReference type="IntAct" id="Q24418">
    <property type="interactions" value="6"/>
</dbReference>
<dbReference type="STRING" id="7227.FBpp0078410"/>
<dbReference type="TCDB" id="1.A.10.1.25">
    <property type="family name" value="the glutamate-gated ion channel (gic) family of neurotransmitter receptors"/>
</dbReference>
<dbReference type="GlyCosmos" id="Q24418">
    <property type="glycosylation" value="8 sites, No reported glycans"/>
</dbReference>
<dbReference type="GlyGen" id="Q24418">
    <property type="glycosylation" value="8 sites"/>
</dbReference>
<dbReference type="iPTMnet" id="Q24418"/>
<dbReference type="PaxDb" id="7227-FBpp0078410"/>
<dbReference type="EnsemblMetazoa" id="FBtr0078763">
    <property type="protein sequence ID" value="FBpp0078410"/>
    <property type="gene ID" value="FBgn0010399"/>
</dbReference>
<dbReference type="GeneID" id="40665"/>
<dbReference type="KEGG" id="dme:Dmel_CG2902"/>
<dbReference type="UCSC" id="CG2902-RA">
    <property type="organism name" value="d. melanogaster"/>
</dbReference>
<dbReference type="AGR" id="FB:FBgn0010399"/>
<dbReference type="CTD" id="40665"/>
<dbReference type="FlyBase" id="FBgn0010399">
    <property type="gene designation" value="Nmdar1"/>
</dbReference>
<dbReference type="VEuPathDB" id="VectorBase:FBgn0010399"/>
<dbReference type="eggNOG" id="KOG4440">
    <property type="taxonomic scope" value="Eukaryota"/>
</dbReference>
<dbReference type="GeneTree" id="ENSGT00940000158016"/>
<dbReference type="HOGENOM" id="CLU_007257_2_0_1"/>
<dbReference type="InParanoid" id="Q24418"/>
<dbReference type="OMA" id="FANNTPD"/>
<dbReference type="OrthoDB" id="5984008at2759"/>
<dbReference type="PhylomeDB" id="Q24418"/>
<dbReference type="Reactome" id="R-DME-3928662">
    <property type="pathway name" value="EPHB-mediated forward signaling"/>
</dbReference>
<dbReference type="Reactome" id="R-DME-438066">
    <property type="pathway name" value="Unblocking of NMDA receptors, glutamate binding and activation"/>
</dbReference>
<dbReference type="Reactome" id="R-DME-8849932">
    <property type="pathway name" value="Synaptic adhesion-like molecules"/>
</dbReference>
<dbReference type="Reactome" id="R-DME-9609736">
    <property type="pathway name" value="Assembly and cell surface presentation of NMDA receptors"/>
</dbReference>
<dbReference type="BioGRID-ORCS" id="40665">
    <property type="hits" value="0 hits in 3 CRISPR screens"/>
</dbReference>
<dbReference type="GenomeRNAi" id="40665"/>
<dbReference type="PRO" id="PR:Q24418"/>
<dbReference type="Proteomes" id="UP000000803">
    <property type="component" value="Chromosome 3R"/>
</dbReference>
<dbReference type="Bgee" id="FBgn0010399">
    <property type="expression patterns" value="Expressed in leg muscle motor neuron in post-embryonic organism and 71 other cell types or tissues"/>
</dbReference>
<dbReference type="GO" id="GO:0008328">
    <property type="term" value="C:ionotropic glutamate receptor complex"/>
    <property type="evidence" value="ECO:0000353"/>
    <property type="project" value="FlyBase"/>
</dbReference>
<dbReference type="GO" id="GO:0016020">
    <property type="term" value="C:membrane"/>
    <property type="evidence" value="ECO:0000314"/>
    <property type="project" value="FlyBase"/>
</dbReference>
<dbReference type="GO" id="GO:0043005">
    <property type="term" value="C:neuron projection"/>
    <property type="evidence" value="ECO:0000318"/>
    <property type="project" value="GO_Central"/>
</dbReference>
<dbReference type="GO" id="GO:0017146">
    <property type="term" value="C:NMDA selective glutamate receptor complex"/>
    <property type="evidence" value="ECO:0000314"/>
    <property type="project" value="UniProtKB"/>
</dbReference>
<dbReference type="GO" id="GO:0005886">
    <property type="term" value="C:plasma membrane"/>
    <property type="evidence" value="ECO:0000318"/>
    <property type="project" value="GO_Central"/>
</dbReference>
<dbReference type="GO" id="GO:0014069">
    <property type="term" value="C:postsynaptic density"/>
    <property type="evidence" value="ECO:0007669"/>
    <property type="project" value="UniProtKB-SubCell"/>
</dbReference>
<dbReference type="GO" id="GO:0045211">
    <property type="term" value="C:postsynaptic membrane"/>
    <property type="evidence" value="ECO:0000314"/>
    <property type="project" value="UniProtKB"/>
</dbReference>
<dbReference type="GO" id="GO:0045202">
    <property type="term" value="C:synapse"/>
    <property type="evidence" value="ECO:0000318"/>
    <property type="project" value="GO_Central"/>
</dbReference>
<dbReference type="GO" id="GO:0004972">
    <property type="term" value="F:NMDA glutamate receptor activity"/>
    <property type="evidence" value="ECO:0000250"/>
    <property type="project" value="FlyBase"/>
</dbReference>
<dbReference type="GO" id="GO:0038023">
    <property type="term" value="F:signaling receptor activity"/>
    <property type="evidence" value="ECO:0000318"/>
    <property type="project" value="GO_Central"/>
</dbReference>
<dbReference type="GO" id="GO:0008306">
    <property type="term" value="P:associative learning"/>
    <property type="evidence" value="ECO:0000314"/>
    <property type="project" value="FlyBase"/>
</dbReference>
<dbReference type="GO" id="GO:0048149">
    <property type="term" value="P:behavioral response to ethanol"/>
    <property type="evidence" value="ECO:0000315"/>
    <property type="project" value="FlyBase"/>
</dbReference>
<dbReference type="GO" id="GO:0055074">
    <property type="term" value="P:calcium ion homeostasis"/>
    <property type="evidence" value="ECO:0000315"/>
    <property type="project" value="UniProtKB"/>
</dbReference>
<dbReference type="GO" id="GO:0007268">
    <property type="term" value="P:chemical synaptic transmission"/>
    <property type="evidence" value="ECO:0000315"/>
    <property type="project" value="UniProtKB"/>
</dbReference>
<dbReference type="GO" id="GO:0035235">
    <property type="term" value="P:ionotropic glutamate receptor signaling pathway"/>
    <property type="evidence" value="ECO:0000314"/>
    <property type="project" value="FlyBase"/>
</dbReference>
<dbReference type="GO" id="GO:0007616">
    <property type="term" value="P:long-term memory"/>
    <property type="evidence" value="ECO:0000315"/>
    <property type="project" value="FlyBase"/>
</dbReference>
<dbReference type="GO" id="GO:0072375">
    <property type="term" value="P:medium-term memory"/>
    <property type="evidence" value="ECO:0000315"/>
    <property type="project" value="FlyBase"/>
</dbReference>
<dbReference type="GO" id="GO:0008355">
    <property type="term" value="P:olfactory learning"/>
    <property type="evidence" value="ECO:0000315"/>
    <property type="project" value="FlyBase"/>
</dbReference>
<dbReference type="GO" id="GO:0042331">
    <property type="term" value="P:phototaxis"/>
    <property type="evidence" value="ECO:0000314"/>
    <property type="project" value="FlyBase"/>
</dbReference>
<dbReference type="GO" id="GO:0042391">
    <property type="term" value="P:regulation of membrane potential"/>
    <property type="evidence" value="ECO:0000315"/>
    <property type="project" value="UniProtKB"/>
</dbReference>
<dbReference type="GO" id="GO:0050975">
    <property type="term" value="P:sensory perception of touch"/>
    <property type="evidence" value="ECO:0000315"/>
    <property type="project" value="FlyBase"/>
</dbReference>
<dbReference type="CDD" id="cd06379">
    <property type="entry name" value="PBP1_iGluR_NMDA_NR1"/>
    <property type="match status" value="1"/>
</dbReference>
<dbReference type="CDD" id="cd13719">
    <property type="entry name" value="PBP2_iGluR_NMDA_Nr1"/>
    <property type="match status" value="1"/>
</dbReference>
<dbReference type="FunFam" id="3.40.190.10:FF:000177">
    <property type="entry name" value="Glutamate [NMDA] receptor subunit 1"/>
    <property type="match status" value="1"/>
</dbReference>
<dbReference type="FunFam" id="3.40.50.2300:FF:000266">
    <property type="entry name" value="Glutamate [NMDA] receptor subunit 1"/>
    <property type="match status" value="1"/>
</dbReference>
<dbReference type="FunFam" id="3.40.190.10:FF:000010">
    <property type="entry name" value="glutamate receptor ionotropic, NMDA 1 isoform X1"/>
    <property type="match status" value="1"/>
</dbReference>
<dbReference type="FunFam" id="3.40.50.2300:FF:000025">
    <property type="entry name" value="glutamate receptor ionotropic, NMDA 1 isoform X1"/>
    <property type="match status" value="1"/>
</dbReference>
<dbReference type="Gene3D" id="1.10.287.70">
    <property type="match status" value="1"/>
</dbReference>
<dbReference type="Gene3D" id="3.40.50.2300">
    <property type="match status" value="2"/>
</dbReference>
<dbReference type="Gene3D" id="3.40.190.10">
    <property type="entry name" value="Periplasmic binding protein-like II"/>
    <property type="match status" value="2"/>
</dbReference>
<dbReference type="InterPro" id="IPR001828">
    <property type="entry name" value="ANF_lig-bd_rcpt"/>
</dbReference>
<dbReference type="InterPro" id="IPR018882">
    <property type="entry name" value="CaM-bd_C0_NMDA_rcpt_NR1"/>
</dbReference>
<dbReference type="InterPro" id="IPR019594">
    <property type="entry name" value="Glu/Gly-bd"/>
</dbReference>
<dbReference type="InterPro" id="IPR001508">
    <property type="entry name" value="Iono_Glu_rcpt_met"/>
</dbReference>
<dbReference type="InterPro" id="IPR015683">
    <property type="entry name" value="Ionotropic_Glu_rcpt"/>
</dbReference>
<dbReference type="InterPro" id="IPR001320">
    <property type="entry name" value="Iontro_rcpt_C"/>
</dbReference>
<dbReference type="InterPro" id="IPR049872">
    <property type="entry name" value="NMDA1-like_ligand-bd"/>
</dbReference>
<dbReference type="InterPro" id="IPR049873">
    <property type="entry name" value="NMDA1-like_N"/>
</dbReference>
<dbReference type="InterPro" id="IPR028082">
    <property type="entry name" value="Peripla_BP_I"/>
</dbReference>
<dbReference type="PANTHER" id="PTHR18966">
    <property type="entry name" value="IONOTROPIC GLUTAMATE RECEPTOR"/>
    <property type="match status" value="1"/>
</dbReference>
<dbReference type="Pfam" id="PF01094">
    <property type="entry name" value="ANF_receptor"/>
    <property type="match status" value="1"/>
</dbReference>
<dbReference type="Pfam" id="PF10562">
    <property type="entry name" value="CaM_bdg_C0"/>
    <property type="match status" value="1"/>
</dbReference>
<dbReference type="Pfam" id="PF00060">
    <property type="entry name" value="Lig_chan"/>
    <property type="match status" value="1"/>
</dbReference>
<dbReference type="Pfam" id="PF10613">
    <property type="entry name" value="Lig_chan-Glu_bd"/>
    <property type="match status" value="1"/>
</dbReference>
<dbReference type="PRINTS" id="PR00177">
    <property type="entry name" value="NMDARECEPTOR"/>
</dbReference>
<dbReference type="SMART" id="SM00918">
    <property type="entry name" value="Lig_chan-Glu_bd"/>
    <property type="match status" value="1"/>
</dbReference>
<dbReference type="SMART" id="SM00079">
    <property type="entry name" value="PBPe"/>
    <property type="match status" value="1"/>
</dbReference>
<dbReference type="SUPFAM" id="SSF53822">
    <property type="entry name" value="Periplasmic binding protein-like I"/>
    <property type="match status" value="1"/>
</dbReference>
<dbReference type="SUPFAM" id="SSF53850">
    <property type="entry name" value="Periplasmic binding protein-like II"/>
    <property type="match status" value="1"/>
</dbReference>
<dbReference type="SUPFAM" id="SSF81324">
    <property type="entry name" value="Voltage-gated potassium channels"/>
    <property type="match status" value="1"/>
</dbReference>
<reference evidence="13 16" key="1">
    <citation type="journal article" date="1993" name="FEBS Lett.">
        <title>Glutamate receptors of Drosophila melanogaster. Primary structure of a putative NMDA receptor protein expressed in the head of the adult fly.</title>
        <authorList>
            <person name="Ultsch A."/>
            <person name="Schuster C.M."/>
            <person name="Laube B."/>
            <person name="Betz H."/>
            <person name="Schmitt B."/>
        </authorList>
    </citation>
    <scope>NUCLEOTIDE SEQUENCE [MRNA]</scope>
    <scope>TISSUE SPECIFICITY</scope>
    <scope>DEVELOPMENTAL STAGE</scope>
    <source>
        <strain evidence="16">Berlin</strain>
        <strain evidence="16">Canton-S</strain>
        <tissue evidence="16">Head</tissue>
    </source>
</reference>
<reference evidence="13" key="2">
    <citation type="journal article" date="2002" name="Proc. Natl. Acad. Sci. U.S.A.">
        <title>Insect NMDA receptors mediate juvenile hormone biosynthesis.</title>
        <authorList>
            <person name="Chiang A.-S."/>
            <person name="Lin W.-Y."/>
            <person name="Liu H.-P."/>
            <person name="Pszczolkowski M.A."/>
            <person name="Fu T.-F."/>
            <person name="Chiu S.-L."/>
            <person name="Holbrook G.L."/>
        </authorList>
    </citation>
    <scope>NUCLEOTIDE SEQUENCE [GENOMIC DNA / MRNA]</scope>
    <scope>TISSUE SPECIFICITY</scope>
</reference>
<reference evidence="14" key="3">
    <citation type="journal article" date="2000" name="Science">
        <title>The genome sequence of Drosophila melanogaster.</title>
        <authorList>
            <person name="Adams M.D."/>
            <person name="Celniker S.E."/>
            <person name="Holt R.A."/>
            <person name="Evans C.A."/>
            <person name="Gocayne J.D."/>
            <person name="Amanatides P.G."/>
            <person name="Scherer S.E."/>
            <person name="Li P.W."/>
            <person name="Hoskins R.A."/>
            <person name="Galle R.F."/>
            <person name="George R.A."/>
            <person name="Lewis S.E."/>
            <person name="Richards S."/>
            <person name="Ashburner M."/>
            <person name="Henderson S.N."/>
            <person name="Sutton G.G."/>
            <person name="Wortman J.R."/>
            <person name="Yandell M.D."/>
            <person name="Zhang Q."/>
            <person name="Chen L.X."/>
            <person name="Brandon R.C."/>
            <person name="Rogers Y.-H.C."/>
            <person name="Blazej R.G."/>
            <person name="Champe M."/>
            <person name="Pfeiffer B.D."/>
            <person name="Wan K.H."/>
            <person name="Doyle C."/>
            <person name="Baxter E.G."/>
            <person name="Helt G."/>
            <person name="Nelson C.R."/>
            <person name="Miklos G.L.G."/>
            <person name="Abril J.F."/>
            <person name="Agbayani A."/>
            <person name="An H.-J."/>
            <person name="Andrews-Pfannkoch C."/>
            <person name="Baldwin D."/>
            <person name="Ballew R.M."/>
            <person name="Basu A."/>
            <person name="Baxendale J."/>
            <person name="Bayraktaroglu L."/>
            <person name="Beasley E.M."/>
            <person name="Beeson K.Y."/>
            <person name="Benos P.V."/>
            <person name="Berman B.P."/>
            <person name="Bhandari D."/>
            <person name="Bolshakov S."/>
            <person name="Borkova D."/>
            <person name="Botchan M.R."/>
            <person name="Bouck J."/>
            <person name="Brokstein P."/>
            <person name="Brottier P."/>
            <person name="Burtis K.C."/>
            <person name="Busam D.A."/>
            <person name="Butler H."/>
            <person name="Cadieu E."/>
            <person name="Center A."/>
            <person name="Chandra I."/>
            <person name="Cherry J.M."/>
            <person name="Cawley S."/>
            <person name="Dahlke C."/>
            <person name="Davenport L.B."/>
            <person name="Davies P."/>
            <person name="de Pablos B."/>
            <person name="Delcher A."/>
            <person name="Deng Z."/>
            <person name="Mays A.D."/>
            <person name="Dew I."/>
            <person name="Dietz S.M."/>
            <person name="Dodson K."/>
            <person name="Doup L.E."/>
            <person name="Downes M."/>
            <person name="Dugan-Rocha S."/>
            <person name="Dunkov B.C."/>
            <person name="Dunn P."/>
            <person name="Durbin K.J."/>
            <person name="Evangelista C.C."/>
            <person name="Ferraz C."/>
            <person name="Ferriera S."/>
            <person name="Fleischmann W."/>
            <person name="Fosler C."/>
            <person name="Gabrielian A.E."/>
            <person name="Garg N.S."/>
            <person name="Gelbart W.M."/>
            <person name="Glasser K."/>
            <person name="Glodek A."/>
            <person name="Gong F."/>
            <person name="Gorrell J.H."/>
            <person name="Gu Z."/>
            <person name="Guan P."/>
            <person name="Harris M."/>
            <person name="Harris N.L."/>
            <person name="Harvey D.A."/>
            <person name="Heiman T.J."/>
            <person name="Hernandez J.R."/>
            <person name="Houck J."/>
            <person name="Hostin D."/>
            <person name="Houston K.A."/>
            <person name="Howland T.J."/>
            <person name="Wei M.-H."/>
            <person name="Ibegwam C."/>
            <person name="Jalali M."/>
            <person name="Kalush F."/>
            <person name="Karpen G.H."/>
            <person name="Ke Z."/>
            <person name="Kennison J.A."/>
            <person name="Ketchum K.A."/>
            <person name="Kimmel B.E."/>
            <person name="Kodira C.D."/>
            <person name="Kraft C.L."/>
            <person name="Kravitz S."/>
            <person name="Kulp D."/>
            <person name="Lai Z."/>
            <person name="Lasko P."/>
            <person name="Lei Y."/>
            <person name="Levitsky A.A."/>
            <person name="Li J.H."/>
            <person name="Li Z."/>
            <person name="Liang Y."/>
            <person name="Lin X."/>
            <person name="Liu X."/>
            <person name="Mattei B."/>
            <person name="McIntosh T.C."/>
            <person name="McLeod M.P."/>
            <person name="McPherson D."/>
            <person name="Merkulov G."/>
            <person name="Milshina N.V."/>
            <person name="Mobarry C."/>
            <person name="Morris J."/>
            <person name="Moshrefi A."/>
            <person name="Mount S.M."/>
            <person name="Moy M."/>
            <person name="Murphy B."/>
            <person name="Murphy L."/>
            <person name="Muzny D.M."/>
            <person name="Nelson D.L."/>
            <person name="Nelson D.R."/>
            <person name="Nelson K.A."/>
            <person name="Nixon K."/>
            <person name="Nusskern D.R."/>
            <person name="Pacleb J.M."/>
            <person name="Palazzolo M."/>
            <person name="Pittman G.S."/>
            <person name="Pan S."/>
            <person name="Pollard J."/>
            <person name="Puri V."/>
            <person name="Reese M.G."/>
            <person name="Reinert K."/>
            <person name="Remington K."/>
            <person name="Saunders R.D.C."/>
            <person name="Scheeler F."/>
            <person name="Shen H."/>
            <person name="Shue B.C."/>
            <person name="Siden-Kiamos I."/>
            <person name="Simpson M."/>
            <person name="Skupski M.P."/>
            <person name="Smith T.J."/>
            <person name="Spier E."/>
            <person name="Spradling A.C."/>
            <person name="Stapleton M."/>
            <person name="Strong R."/>
            <person name="Sun E."/>
            <person name="Svirskas R."/>
            <person name="Tector C."/>
            <person name="Turner R."/>
            <person name="Venter E."/>
            <person name="Wang A.H."/>
            <person name="Wang X."/>
            <person name="Wang Z.-Y."/>
            <person name="Wassarman D.A."/>
            <person name="Weinstock G.M."/>
            <person name="Weissenbach J."/>
            <person name="Williams S.M."/>
            <person name="Woodage T."/>
            <person name="Worley K.C."/>
            <person name="Wu D."/>
            <person name="Yang S."/>
            <person name="Yao Q.A."/>
            <person name="Ye J."/>
            <person name="Yeh R.-F."/>
            <person name="Zaveri J.S."/>
            <person name="Zhan M."/>
            <person name="Zhang G."/>
            <person name="Zhao Q."/>
            <person name="Zheng L."/>
            <person name="Zheng X.H."/>
            <person name="Zhong F.N."/>
            <person name="Zhong W."/>
            <person name="Zhou X."/>
            <person name="Zhu S.C."/>
            <person name="Zhu X."/>
            <person name="Smith H.O."/>
            <person name="Gibbs R.A."/>
            <person name="Myers E.W."/>
            <person name="Rubin G.M."/>
            <person name="Venter J.C."/>
        </authorList>
    </citation>
    <scope>NUCLEOTIDE SEQUENCE [LARGE SCALE GENOMIC DNA]</scope>
    <source>
        <strain evidence="5">Berkeley</strain>
    </source>
</reference>
<reference evidence="13 14" key="4">
    <citation type="journal article" date="2002" name="Genome Biol.">
        <title>Annotation of the Drosophila melanogaster euchromatic genome: a systematic review.</title>
        <authorList>
            <person name="Misra S."/>
            <person name="Crosby M.A."/>
            <person name="Mungall C.J."/>
            <person name="Matthews B.B."/>
            <person name="Campbell K.S."/>
            <person name="Hradecky P."/>
            <person name="Huang Y."/>
            <person name="Kaminker J.S."/>
            <person name="Millburn G.H."/>
            <person name="Prochnik S.E."/>
            <person name="Smith C.D."/>
            <person name="Tupy J.L."/>
            <person name="Whitfield E.J."/>
            <person name="Bayraktaroglu L."/>
            <person name="Berman B.P."/>
            <person name="Bettencourt B.R."/>
            <person name="Celniker S.E."/>
            <person name="de Grey A.D.N.J."/>
            <person name="Drysdale R.A."/>
            <person name="Harris N.L."/>
            <person name="Richter J."/>
            <person name="Russo S."/>
            <person name="Schroeder A.J."/>
            <person name="Shu S.Q."/>
            <person name="Stapleton M."/>
            <person name="Yamada C."/>
            <person name="Ashburner M."/>
            <person name="Gelbart W.M."/>
            <person name="Rubin G.M."/>
            <person name="Lewis S.E."/>
        </authorList>
    </citation>
    <scope>GENOME REANNOTATION</scope>
    <source>
        <strain>Berkeley</strain>
    </source>
</reference>
<reference evidence="15" key="5">
    <citation type="journal article" date="2002" name="Genome Biol.">
        <title>A Drosophila full-length cDNA resource.</title>
        <authorList>
            <person name="Stapleton M."/>
            <person name="Carlson J.W."/>
            <person name="Brokstein P."/>
            <person name="Yu C."/>
            <person name="Champe M."/>
            <person name="George R.A."/>
            <person name="Guarin H."/>
            <person name="Kronmiller B."/>
            <person name="Pacleb J.M."/>
            <person name="Park S."/>
            <person name="Wan K.H."/>
            <person name="Rubin G.M."/>
            <person name="Celniker S.E."/>
        </authorList>
    </citation>
    <scope>NUCLEOTIDE SEQUENCE [LARGE SCALE MRNA]</scope>
    <source>
        <strain evidence="15">Berkeley</strain>
        <tissue evidence="7">Embryo</tissue>
    </source>
</reference>
<reference evidence="13" key="6">
    <citation type="journal article" date="2005" name="Curr. Biol.">
        <title>NMDA receptors mediate olfactory learning and memory in Drosophila.</title>
        <authorList>
            <person name="Xia S."/>
            <person name="Miyashita T."/>
            <person name="Fu T.-F."/>
            <person name="Lin W.-Y."/>
            <person name="Wu C.-L."/>
            <person name="Pyzocha L."/>
            <person name="Lin I.-R."/>
            <person name="Saitoe M."/>
            <person name="Tully T."/>
            <person name="Chiang A.-S."/>
        </authorList>
    </citation>
    <scope>FUNCTION</scope>
    <scope>INTERACTION WITH NMDAR2</scope>
    <scope>SUBCELLULAR LOCATION</scope>
    <scope>TISSUE SPECIFICITY</scope>
    <scope>DISRUPTION PHENOTYPE</scope>
</reference>
<reference evidence="13" key="7">
    <citation type="journal article" date="2007" name="Glycobiology">
        <title>Identification of N-glycosylated proteins from the central nervous system of Drosophila melanogaster.</title>
        <authorList>
            <person name="Koles K."/>
            <person name="Lim J.-M."/>
            <person name="Aoki K."/>
            <person name="Porterfield M."/>
            <person name="Tiemeyer M."/>
            <person name="Wells L."/>
            <person name="Panin V."/>
        </authorList>
    </citation>
    <scope>GLYCOSYLATION [LARGE SCALE ANALYSIS] AT ASN-693</scope>
    <scope>IDENTIFICATION BY MASS SPECTROMETRY</scope>
    <source>
        <strain>Oregon-R</strain>
        <tissue evidence="9">Head</tissue>
    </source>
</reference>
<accession>Q24418</accession>
<comment type="function">
    <text evidence="1 8">NMDA receptor subtype of glutamate-gated ion channels with high calcium permeability and voltage-dependent sensitivity to magnesium. Mediated by glycine. This protein plays a key role in synaptic plasticity, synaptogenesis, excitotoxicity, memory acquisition and learning. It mediates neuronal functions in glutamate neurotransmission. Is involved in the cell surface targeting of NMDA receptors. Plays a role in associative learning and in long-term memory consolidation.</text>
</comment>
<comment type="subunit">
    <text>Forms a heteromeric NMDA channel with Nmdar2.</text>
</comment>
<comment type="subcellular location">
    <subcellularLocation>
        <location evidence="8">Cell membrane</location>
        <topology evidence="8">Multi-pass membrane protein</topology>
    </subcellularLocation>
    <subcellularLocation>
        <location evidence="8">Postsynaptic cell membrane</location>
    </subcellularLocation>
    <subcellularLocation>
        <location evidence="8">Postsynaptic density</location>
    </subcellularLocation>
</comment>
<comment type="tissue specificity">
    <text evidence="6 8 10">Highly expressed in adult heads: in the brain and ring gland. Low expression throughout the entire brain is also seen. Higher expression levels were observed in some scattered cell bodies and part of their fibers, including those from several pairs of DPM (dorsal-posterior-medial) neurons surrounding the calyx, DAL (dorsal-anterior-lateral) and DPL (dorsal-posterior-lateral) neurons in the lateral protocerebrum (LP), VAL (ventral-anterior-lateral) neurons in the anterior protocerebrum, and two pairs of VP (ventral-posterior) neurons in the posterior protocerebrum. Many cell bodies in the optic lobes show preferential expression. Punctuate expression is notably detected in many brain regions including the superior medial protocerebrum. Weakly expressed in the antennal lobes and central complex.</text>
</comment>
<comment type="developmental stage">
    <text evidence="10">Expression first seen in late embryos. Levels are low during larval development and increase in late pupae to persist through to adulthood.</text>
</comment>
<comment type="disruption phenotype">
    <text evidence="8">Flies exhibit disruption of olfactory learning.</text>
</comment>
<comment type="similarity">
    <text evidence="13">Belongs to the glutamate-gated ion channel (TC 1.A.10.1) family.</text>
</comment>
<keyword id="KW-0106">Calcium</keyword>
<keyword id="KW-1003">Cell membrane</keyword>
<keyword id="KW-1015">Disulfide bond</keyword>
<keyword id="KW-0325">Glycoprotein</keyword>
<keyword id="KW-0407">Ion channel</keyword>
<keyword id="KW-0406">Ion transport</keyword>
<keyword id="KW-1071">Ligand-gated ion channel</keyword>
<keyword id="KW-0460">Magnesium</keyword>
<keyword id="KW-0472">Membrane</keyword>
<keyword id="KW-0597">Phosphoprotein</keyword>
<keyword id="KW-0628">Postsynaptic cell membrane</keyword>
<keyword id="KW-0675">Receptor</keyword>
<keyword id="KW-1185">Reference proteome</keyword>
<keyword id="KW-0732">Signal</keyword>
<keyword id="KW-0770">Synapse</keyword>
<keyword id="KW-0812">Transmembrane</keyword>
<keyword id="KW-1133">Transmembrane helix</keyword>
<keyword id="KW-0813">Transport</keyword>
<name>NMDA1_DROME</name>
<protein>
    <recommendedName>
        <fullName evidence="11">Glutamate [NMDA] receptor subunit 1</fullName>
        <shortName evidence="12">DNMDAR-I</shortName>
        <shortName evidence="11">dNR1</shortName>
    </recommendedName>
</protein>
<evidence type="ECO:0000250" key="1">
    <source>
        <dbReference type="UniProtKB" id="P35439"/>
    </source>
</evidence>
<evidence type="ECO:0000250" key="2">
    <source>
        <dbReference type="UniProtKB" id="Q05586"/>
    </source>
</evidence>
<evidence type="ECO:0000255" key="3"/>
<evidence type="ECO:0000256" key="4">
    <source>
        <dbReference type="SAM" id="MobiDB-lite"/>
    </source>
</evidence>
<evidence type="ECO:0000269" key="5">
    <source>
    </source>
</evidence>
<evidence type="ECO:0000269" key="6">
    <source>
    </source>
</evidence>
<evidence type="ECO:0000269" key="7">
    <source>
    </source>
</evidence>
<evidence type="ECO:0000269" key="8">
    <source>
    </source>
</evidence>
<evidence type="ECO:0000269" key="9">
    <source>
    </source>
</evidence>
<evidence type="ECO:0000269" key="10">
    <source>
    </source>
</evidence>
<evidence type="ECO:0000303" key="11">
    <source>
    </source>
</evidence>
<evidence type="ECO:0000303" key="12">
    <source>
    </source>
</evidence>
<evidence type="ECO:0000305" key="13"/>
<evidence type="ECO:0000312" key="14">
    <source>
        <dbReference type="EMBL" id="AAF52016.1"/>
    </source>
</evidence>
<evidence type="ECO:0000312" key="15">
    <source>
        <dbReference type="EMBL" id="AAL48048.1"/>
    </source>
</evidence>
<evidence type="ECO:0000312" key="16">
    <source>
        <dbReference type="EMBL" id="CAA50675.1"/>
    </source>
</evidence>
<evidence type="ECO:0000312" key="17">
    <source>
        <dbReference type="FlyBase" id="FBgn0010399"/>
    </source>
</evidence>
<organism>
    <name type="scientific">Drosophila melanogaster</name>
    <name type="common">Fruit fly</name>
    <dbReference type="NCBI Taxonomy" id="7227"/>
    <lineage>
        <taxon>Eukaryota</taxon>
        <taxon>Metazoa</taxon>
        <taxon>Ecdysozoa</taxon>
        <taxon>Arthropoda</taxon>
        <taxon>Hexapoda</taxon>
        <taxon>Insecta</taxon>
        <taxon>Pterygota</taxon>
        <taxon>Neoptera</taxon>
        <taxon>Endopterygota</taxon>
        <taxon>Diptera</taxon>
        <taxon>Brachycera</taxon>
        <taxon>Muscomorpha</taxon>
        <taxon>Ephydroidea</taxon>
        <taxon>Drosophilidae</taxon>
        <taxon>Drosophila</taxon>
        <taxon>Sophophora</taxon>
    </lineage>
</organism>
<proteinExistence type="evidence at protein level"/>